<proteinExistence type="evidence at transcript level"/>
<dbReference type="EMBL" id="CR857934">
    <property type="protein sequence ID" value="CAH90181.1"/>
    <property type="molecule type" value="mRNA"/>
</dbReference>
<dbReference type="RefSeq" id="NP_001125063.1">
    <property type="nucleotide sequence ID" value="NM_001131591.1"/>
</dbReference>
<dbReference type="SMR" id="Q5RDH6"/>
<dbReference type="FunCoup" id="Q5RDH6">
    <property type="interactions" value="1817"/>
</dbReference>
<dbReference type="STRING" id="9601.ENSPPYP00000016144"/>
<dbReference type="MEROPS" id="M28.972"/>
<dbReference type="GlyCosmos" id="Q5RDH6">
    <property type="glycosylation" value="4 sites, No reported glycans"/>
</dbReference>
<dbReference type="GeneID" id="100171944"/>
<dbReference type="KEGG" id="pon:100171944"/>
<dbReference type="CTD" id="7037"/>
<dbReference type="eggNOG" id="KOG2195">
    <property type="taxonomic scope" value="Eukaryota"/>
</dbReference>
<dbReference type="HOGENOM" id="CLU_005688_5_0_1"/>
<dbReference type="InParanoid" id="Q5RDH6"/>
<dbReference type="OrthoDB" id="5841748at2759"/>
<dbReference type="TreeFam" id="TF312981"/>
<dbReference type="Proteomes" id="UP000001595">
    <property type="component" value="Unplaced"/>
</dbReference>
<dbReference type="GO" id="GO:0009897">
    <property type="term" value="C:external side of plasma membrane"/>
    <property type="evidence" value="ECO:0007669"/>
    <property type="project" value="TreeGrafter"/>
</dbReference>
<dbReference type="GO" id="GO:0042470">
    <property type="term" value="C:melanosome"/>
    <property type="evidence" value="ECO:0007669"/>
    <property type="project" value="UniProtKB-SubCell"/>
</dbReference>
<dbReference type="GO" id="GO:0004998">
    <property type="term" value="F:transferrin receptor activity"/>
    <property type="evidence" value="ECO:0000250"/>
    <property type="project" value="UniProtKB"/>
</dbReference>
<dbReference type="GO" id="GO:0006879">
    <property type="term" value="P:intracellular iron ion homeostasis"/>
    <property type="evidence" value="ECO:0007669"/>
    <property type="project" value="TreeGrafter"/>
</dbReference>
<dbReference type="GO" id="GO:0030890">
    <property type="term" value="P:positive regulation of B cell proliferation"/>
    <property type="evidence" value="ECO:0000250"/>
    <property type="project" value="UniProtKB"/>
</dbReference>
<dbReference type="GO" id="GO:0045830">
    <property type="term" value="P:positive regulation of isotype switching"/>
    <property type="evidence" value="ECO:0000250"/>
    <property type="project" value="UniProtKB"/>
</dbReference>
<dbReference type="GO" id="GO:0042102">
    <property type="term" value="P:positive regulation of T cell proliferation"/>
    <property type="evidence" value="ECO:0000250"/>
    <property type="project" value="UniProtKB"/>
</dbReference>
<dbReference type="GO" id="GO:0031623">
    <property type="term" value="P:receptor internalization"/>
    <property type="evidence" value="ECO:0000250"/>
    <property type="project" value="UniProtKB"/>
</dbReference>
<dbReference type="GO" id="GO:0033572">
    <property type="term" value="P:transferrin transport"/>
    <property type="evidence" value="ECO:0000250"/>
    <property type="project" value="UniProtKB"/>
</dbReference>
<dbReference type="CDD" id="cd09848">
    <property type="entry name" value="M28_TfR"/>
    <property type="match status" value="1"/>
</dbReference>
<dbReference type="CDD" id="cd02128">
    <property type="entry name" value="PA_TfR"/>
    <property type="match status" value="1"/>
</dbReference>
<dbReference type="FunFam" id="1.20.930.40:FF:000002">
    <property type="entry name" value="Transferrin receptor protein 1"/>
    <property type="match status" value="1"/>
</dbReference>
<dbReference type="FunFam" id="3.40.630.10:FF:000045">
    <property type="entry name" value="Transferrin receptor protein 1"/>
    <property type="match status" value="1"/>
</dbReference>
<dbReference type="FunFam" id="3.50.30.30:FF:000010">
    <property type="entry name" value="Transferrin receptor protein 1"/>
    <property type="match status" value="1"/>
</dbReference>
<dbReference type="Gene3D" id="3.50.30.30">
    <property type="match status" value="1"/>
</dbReference>
<dbReference type="Gene3D" id="1.20.930.40">
    <property type="entry name" value="Transferrin receptor-like, dimerisation domain"/>
    <property type="match status" value="1"/>
</dbReference>
<dbReference type="Gene3D" id="3.40.630.10">
    <property type="entry name" value="Zn peptidases"/>
    <property type="match status" value="1"/>
</dbReference>
<dbReference type="InterPro" id="IPR046450">
    <property type="entry name" value="PA_dom_sf"/>
</dbReference>
<dbReference type="InterPro" id="IPR003137">
    <property type="entry name" value="PA_domain"/>
</dbReference>
<dbReference type="InterPro" id="IPR007484">
    <property type="entry name" value="Peptidase_M28"/>
</dbReference>
<dbReference type="InterPro" id="IPR039373">
    <property type="entry name" value="Peptidase_M28B"/>
</dbReference>
<dbReference type="InterPro" id="IPR007365">
    <property type="entry name" value="TFR-like_dimer_dom"/>
</dbReference>
<dbReference type="InterPro" id="IPR036757">
    <property type="entry name" value="TFR-like_dimer_dom_sf"/>
</dbReference>
<dbReference type="InterPro" id="IPR037324">
    <property type="entry name" value="TfR1/2_PA"/>
</dbReference>
<dbReference type="PANTHER" id="PTHR10404">
    <property type="entry name" value="N-ACETYLATED-ALPHA-LINKED ACIDIC DIPEPTIDASE"/>
    <property type="match status" value="1"/>
</dbReference>
<dbReference type="PANTHER" id="PTHR10404:SF26">
    <property type="entry name" value="TRANSFERRIN RECEPTOR PROTEIN 1"/>
    <property type="match status" value="1"/>
</dbReference>
<dbReference type="Pfam" id="PF02225">
    <property type="entry name" value="PA"/>
    <property type="match status" value="1"/>
</dbReference>
<dbReference type="Pfam" id="PF04389">
    <property type="entry name" value="Peptidase_M28"/>
    <property type="match status" value="1"/>
</dbReference>
<dbReference type="Pfam" id="PF04253">
    <property type="entry name" value="TFR_dimer"/>
    <property type="match status" value="1"/>
</dbReference>
<dbReference type="SUPFAM" id="SSF52025">
    <property type="entry name" value="PA domain"/>
    <property type="match status" value="1"/>
</dbReference>
<dbReference type="SUPFAM" id="SSF47672">
    <property type="entry name" value="Transferrin receptor-like dimerisation domain"/>
    <property type="match status" value="1"/>
</dbReference>
<dbReference type="SUPFAM" id="SSF53187">
    <property type="entry name" value="Zn-dependent exopeptidases"/>
    <property type="match status" value="1"/>
</dbReference>
<keyword id="KW-1003">Cell membrane</keyword>
<keyword id="KW-1015">Disulfide bond</keyword>
<keyword id="KW-0254">Endocytosis</keyword>
<keyword id="KW-0325">Glycoprotein</keyword>
<keyword id="KW-0449">Lipoprotein</keyword>
<keyword id="KW-0472">Membrane</keyword>
<keyword id="KW-0564">Palmitate</keyword>
<keyword id="KW-0597">Phosphoprotein</keyword>
<keyword id="KW-0675">Receptor</keyword>
<keyword id="KW-1185">Reference proteome</keyword>
<keyword id="KW-0735">Signal-anchor</keyword>
<keyword id="KW-0812">Transmembrane</keyword>
<keyword id="KW-1133">Transmembrane helix</keyword>
<gene>
    <name type="primary">TFRC</name>
</gene>
<name>TFR1_PONAB</name>
<reference key="1">
    <citation type="submission" date="2004-11" db="EMBL/GenBank/DDBJ databases">
        <authorList>
            <consortium name="The German cDNA consortium"/>
        </authorList>
    </citation>
    <scope>NUCLEOTIDE SEQUENCE [LARGE SCALE MRNA]</scope>
    <source>
        <tissue>Kidney</tissue>
    </source>
</reference>
<protein>
    <recommendedName>
        <fullName>Transferrin receptor protein 1</fullName>
        <shortName>TR</shortName>
        <shortName>TfR</shortName>
        <shortName>TfR1</shortName>
        <shortName>Trfr</shortName>
    </recommendedName>
    <cdAntigenName>CD71</cdAntigenName>
</protein>
<evidence type="ECO:0000250" key="1"/>
<evidence type="ECO:0000250" key="2">
    <source>
        <dbReference type="UniProtKB" id="P02786"/>
    </source>
</evidence>
<evidence type="ECO:0000250" key="3">
    <source>
        <dbReference type="UniProtKB" id="Q62351"/>
    </source>
</evidence>
<evidence type="ECO:0000255" key="4"/>
<evidence type="ECO:0000305" key="5"/>
<feature type="chain" id="PRO_0000237617" description="Transferrin receptor protein 1">
    <location>
        <begin position="1"/>
        <end position="760"/>
    </location>
</feature>
<feature type="topological domain" description="Cytoplasmic" evidence="4">
    <location>
        <begin position="1"/>
        <end position="65"/>
    </location>
</feature>
<feature type="transmembrane region" description="Helical; Signal-anchor for type II membrane protein" evidence="4">
    <location>
        <begin position="66"/>
        <end position="86"/>
    </location>
</feature>
<feature type="topological domain" description="Extracellular" evidence="4">
    <location>
        <begin position="87"/>
        <end position="760"/>
    </location>
</feature>
<feature type="domain" description="PA">
    <location>
        <begin position="223"/>
        <end position="313"/>
    </location>
</feature>
<feature type="region of interest" description="Mediates interaction with SH3BP4" evidence="1">
    <location>
        <begin position="1"/>
        <end position="67"/>
    </location>
</feature>
<feature type="region of interest" description="Ligand-binding" evidence="1">
    <location>
        <begin position="569"/>
        <end position="760"/>
    </location>
</feature>
<feature type="short sequence motif" description="Endocytosis signal">
    <location>
        <begin position="20"/>
        <end position="23"/>
    </location>
</feature>
<feature type="short sequence motif" description="Stop-transfer sequence">
    <location>
        <begin position="58"/>
        <end position="61"/>
    </location>
</feature>
<feature type="short sequence motif" description="Cell attachment site" evidence="4">
    <location>
        <begin position="646"/>
        <end position="648"/>
    </location>
</feature>
<feature type="modified residue" description="Phosphoserine" evidence="2">
    <location>
        <position position="10"/>
    </location>
</feature>
<feature type="modified residue" description="Phosphoserine" evidence="3">
    <location>
        <position position="19"/>
    </location>
</feature>
<feature type="modified residue" description="Phosphotyrosine" evidence="2">
    <location>
        <position position="20"/>
    </location>
</feature>
<feature type="modified residue" description="Phosphothreonine" evidence="2">
    <location>
        <position position="21"/>
    </location>
</feature>
<feature type="modified residue" description="Phosphoserine" evidence="2">
    <location>
        <position position="24"/>
    </location>
</feature>
<feature type="lipid moiety-binding region" description="S-palmitoyl cysteine" evidence="1">
    <location>
        <position position="62"/>
    </location>
</feature>
<feature type="lipid moiety-binding region" description="S-palmitoyl cysteine" evidence="1">
    <location>
        <position position="67"/>
    </location>
</feature>
<feature type="glycosylation site" description="N-linked (GlcNAc...) asparagine" evidence="2">
    <location>
        <position position="251"/>
    </location>
</feature>
<feature type="glycosylation site" description="N-linked (GlcNAc...) asparagine" evidence="2">
    <location>
        <position position="317"/>
    </location>
</feature>
<feature type="glycosylation site" description="N-linked (GlcNAc...) asparagine" evidence="4">
    <location>
        <position position="722"/>
    </location>
</feature>
<feature type="glycosylation site" description="N-linked (GlcNAc...) asparagine" evidence="2">
    <location>
        <position position="727"/>
    </location>
</feature>
<feature type="disulfide bond" description="Interchain" evidence="1">
    <location>
        <position position="89"/>
    </location>
</feature>
<feature type="disulfide bond" description="Interchain" evidence="1">
    <location>
        <position position="98"/>
    </location>
</feature>
<accession>Q5RDH6</accession>
<comment type="function">
    <text evidence="2 3">Cellular uptake of iron occurs via receptor-mediated endocytosis of ligand-occupied transferrin receptor into specialized endosomes (By similarity). Endosomal acidification leads to iron release. The apotransferrin-receptor complex is then recycled to the cell surface with a return to neutral pH and the concomitant loss of affinity of apotransferrin for its receptor. Transferrin receptor is necessary for development of erythrocytes and the nervous system (By similarity). Positively regulates T and B cell proliferation through iron uptake (By similarity). Acts as a lipid sensor that regulates mitochondrial fusion by regulating activation of the JNK pathway (By similarity). When dietary levels of stearate (C18:0) are low, promotes activation of the JNK pathway, resulting in HUWE1-mediated ubiquitination and subsequent degradation of the mitofusin MFN2 and inhibition of mitochondrial fusion (By similarity). When dietary levels of stearate (C18:0) are high, TFRC stearoylation inhibits activation of the JNK pathway and thus degradation of the mitofusin MFN2 (By similarity). Mediates uptake of NICOL1 into fibroblasts where it may regulate extracellular matrix production (By similarity).</text>
</comment>
<comment type="subunit">
    <text evidence="1 2">Homodimer; disulfide-linked. Binds one transferrin or HFE molecule per subunit. Interacts with SH3BP4 (By similarity). Interacts with STEAP3; facilitates TFRC endocytosis in erythroid precursor cells (By similarity).</text>
</comment>
<comment type="subcellular location">
    <subcellularLocation>
        <location evidence="2">Cell membrane</location>
        <topology evidence="2">Single-pass type II membrane protein</topology>
    </subcellularLocation>
    <subcellularLocation>
        <location evidence="2">Melanosome</location>
    </subcellularLocation>
</comment>
<comment type="PTM">
    <text evidence="2">Stearoylated by ZDHHC6 which inhibits TFRC-mediated activation of the JNK pathway and promotes mitochondrial fragmentation (By similarity). Stearoylation does not affect iron uptake (By similarity).</text>
</comment>
<comment type="similarity">
    <text evidence="5">Belongs to the peptidase M28 family. M28B subfamily.</text>
</comment>
<organism>
    <name type="scientific">Pongo abelii</name>
    <name type="common">Sumatran orangutan</name>
    <name type="synonym">Pongo pygmaeus abelii</name>
    <dbReference type="NCBI Taxonomy" id="9601"/>
    <lineage>
        <taxon>Eukaryota</taxon>
        <taxon>Metazoa</taxon>
        <taxon>Chordata</taxon>
        <taxon>Craniata</taxon>
        <taxon>Vertebrata</taxon>
        <taxon>Euteleostomi</taxon>
        <taxon>Mammalia</taxon>
        <taxon>Eutheria</taxon>
        <taxon>Euarchontoglires</taxon>
        <taxon>Primates</taxon>
        <taxon>Haplorrhini</taxon>
        <taxon>Catarrhini</taxon>
        <taxon>Hominidae</taxon>
        <taxon>Pongo</taxon>
    </lineage>
</organism>
<sequence>MMDQARSAFSNLFGGEPLSYTRFSLARQVDGDNSHVEMKLAVDEEENADNNTKANVTKPKRCGGSICYGTIAVIIFFLIGFMIGYLGYCKGVEPKTECERLAGTESPVREEPEEDFPAAPRLYWDDLKKKLSEKLDTTDFTSTIKLLNENSYVPREAGSQKDENLALYVENQFREFKLSKVWRDQHFVKIQVKDSAQNSVIIVDKNGRLVYLVENPGGYVAYSKAATVTGKLVHANFGTKKDFEDLDTPVNGSIVIVRAGKITFAEKVANAESLNAIGVLIYMDQTKFPIVNAELSFFGHAHLGTGDPYTPGFPSFNHTQFPPSRSSGLPNIPVQTISRAAAEKLFGNMEGDCPSDWKTDSTCRMVTSESKNVKLTVSNVLKEIKILNIFGVIKGFVEPDHYVVVGAQRDAWGPGAAKSGVGTALLLKLAEMFSDMVLKDGFQPSRSIIFASWSAGDFGSVGATEWLEGYLSSLHLKAFTYINLDKAVLGTSNFKVSASPLLYTLIEKTMQNVKHPVTGQSLYQDSNWASKVEKLTLDNAAFPFLAYSGIPAVSFCFCEDTDYPYLGTTMDTYKELTERIPELNKVARAAAEVAGQFMIKLTHDVELNLDYERYNSQLLSFVRDLNQYRADIKEMGLSLQWLYSARGDFFRATSRLTTDFGNAEKTDRFVMKKLNDRVMRVEYHFLSPYVSPKESPFRHVFWGSGSHTLSALLENLKLRKQNNSAFNETLFRNQLALATWTIQGAANALSGDVWDIDNEF</sequence>